<gene>
    <name evidence="1" type="primary">rplI</name>
    <name type="ordered locus">NGO_0584</name>
</gene>
<feature type="chain" id="PRO_0000236548" description="Large ribosomal subunit protein bL9">
    <location>
        <begin position="1"/>
        <end position="150"/>
    </location>
</feature>
<organism>
    <name type="scientific">Neisseria gonorrhoeae (strain ATCC 700825 / FA 1090)</name>
    <dbReference type="NCBI Taxonomy" id="242231"/>
    <lineage>
        <taxon>Bacteria</taxon>
        <taxon>Pseudomonadati</taxon>
        <taxon>Pseudomonadota</taxon>
        <taxon>Betaproteobacteria</taxon>
        <taxon>Neisseriales</taxon>
        <taxon>Neisseriaceae</taxon>
        <taxon>Neisseria</taxon>
    </lineage>
</organism>
<evidence type="ECO:0000255" key="1">
    <source>
        <dbReference type="HAMAP-Rule" id="MF_00503"/>
    </source>
</evidence>
<evidence type="ECO:0000305" key="2"/>
<reference key="1">
    <citation type="submission" date="2003-03" db="EMBL/GenBank/DDBJ databases">
        <title>The complete genome sequence of Neisseria gonorrhoeae.</title>
        <authorList>
            <person name="Lewis L.A."/>
            <person name="Gillaspy A.F."/>
            <person name="McLaughlin R.E."/>
            <person name="Gipson M."/>
            <person name="Ducey T.F."/>
            <person name="Ownbey T."/>
            <person name="Hartman K."/>
            <person name="Nydick C."/>
            <person name="Carson M.B."/>
            <person name="Vaughn J."/>
            <person name="Thomson C."/>
            <person name="Song L."/>
            <person name="Lin S."/>
            <person name="Yuan X."/>
            <person name="Najar F."/>
            <person name="Zhan M."/>
            <person name="Ren Q."/>
            <person name="Zhu H."/>
            <person name="Qi S."/>
            <person name="Kenton S.M."/>
            <person name="Lai H."/>
            <person name="White J.D."/>
            <person name="Clifton S."/>
            <person name="Roe B.A."/>
            <person name="Dyer D.W."/>
        </authorList>
    </citation>
    <scope>NUCLEOTIDE SEQUENCE [LARGE SCALE GENOMIC DNA]</scope>
    <source>
        <strain>ATCC 700825 / FA 1090</strain>
    </source>
</reference>
<sequence length="150" mass="15703">MQIILLEKIGGLGNLGDIVTVKNGYARNFLIPAGKAKRATEANMKEFEARRAELEAKQAEILADARARQEKLDGQTVTVAQKAGVDGRLFGSVTNADIAAAIVAAGIEAVKANVRLPNGPLKAVGEYEVEVALHTDAVAKITVAVIAAAE</sequence>
<accession>Q5F922</accession>
<keyword id="KW-1185">Reference proteome</keyword>
<keyword id="KW-0687">Ribonucleoprotein</keyword>
<keyword id="KW-0689">Ribosomal protein</keyword>
<keyword id="KW-0694">RNA-binding</keyword>
<keyword id="KW-0699">rRNA-binding</keyword>
<dbReference type="EMBL" id="AE004969">
    <property type="protein sequence ID" value="AAW89315.1"/>
    <property type="molecule type" value="Genomic_DNA"/>
</dbReference>
<dbReference type="RefSeq" id="WP_002232586.1">
    <property type="nucleotide sequence ID" value="NC_002946.2"/>
</dbReference>
<dbReference type="RefSeq" id="YP_207727.1">
    <property type="nucleotide sequence ID" value="NC_002946.2"/>
</dbReference>
<dbReference type="SMR" id="Q5F922"/>
<dbReference type="STRING" id="242231.NGO_0584"/>
<dbReference type="GeneID" id="66752924"/>
<dbReference type="KEGG" id="ngo:NGO_0584"/>
<dbReference type="PATRIC" id="fig|242231.10.peg.690"/>
<dbReference type="HOGENOM" id="CLU_078938_4_1_4"/>
<dbReference type="Proteomes" id="UP000000535">
    <property type="component" value="Chromosome"/>
</dbReference>
<dbReference type="GO" id="GO:1990904">
    <property type="term" value="C:ribonucleoprotein complex"/>
    <property type="evidence" value="ECO:0007669"/>
    <property type="project" value="UniProtKB-KW"/>
</dbReference>
<dbReference type="GO" id="GO:0005840">
    <property type="term" value="C:ribosome"/>
    <property type="evidence" value="ECO:0007669"/>
    <property type="project" value="UniProtKB-KW"/>
</dbReference>
<dbReference type="GO" id="GO:0019843">
    <property type="term" value="F:rRNA binding"/>
    <property type="evidence" value="ECO:0007669"/>
    <property type="project" value="UniProtKB-UniRule"/>
</dbReference>
<dbReference type="GO" id="GO:0003735">
    <property type="term" value="F:structural constituent of ribosome"/>
    <property type="evidence" value="ECO:0007669"/>
    <property type="project" value="InterPro"/>
</dbReference>
<dbReference type="GO" id="GO:0006412">
    <property type="term" value="P:translation"/>
    <property type="evidence" value="ECO:0007669"/>
    <property type="project" value="UniProtKB-UniRule"/>
</dbReference>
<dbReference type="FunFam" id="3.10.430.100:FF:000010">
    <property type="entry name" value="50S ribosomal protein L9"/>
    <property type="match status" value="1"/>
</dbReference>
<dbReference type="Gene3D" id="3.10.430.100">
    <property type="entry name" value="Ribosomal protein L9, C-terminal domain"/>
    <property type="match status" value="1"/>
</dbReference>
<dbReference type="Gene3D" id="3.40.5.10">
    <property type="entry name" value="Ribosomal protein L9, N-terminal domain"/>
    <property type="match status" value="1"/>
</dbReference>
<dbReference type="HAMAP" id="MF_00503">
    <property type="entry name" value="Ribosomal_bL9"/>
    <property type="match status" value="1"/>
</dbReference>
<dbReference type="InterPro" id="IPR000244">
    <property type="entry name" value="Ribosomal_bL9"/>
</dbReference>
<dbReference type="InterPro" id="IPR009027">
    <property type="entry name" value="Ribosomal_bL9/RNase_H1_N"/>
</dbReference>
<dbReference type="InterPro" id="IPR020594">
    <property type="entry name" value="Ribosomal_bL9_bac/chp"/>
</dbReference>
<dbReference type="InterPro" id="IPR020069">
    <property type="entry name" value="Ribosomal_bL9_C"/>
</dbReference>
<dbReference type="InterPro" id="IPR036791">
    <property type="entry name" value="Ribosomal_bL9_C_sf"/>
</dbReference>
<dbReference type="InterPro" id="IPR020070">
    <property type="entry name" value="Ribosomal_bL9_N"/>
</dbReference>
<dbReference type="InterPro" id="IPR036935">
    <property type="entry name" value="Ribosomal_bL9_N_sf"/>
</dbReference>
<dbReference type="NCBIfam" id="TIGR00158">
    <property type="entry name" value="L9"/>
    <property type="match status" value="1"/>
</dbReference>
<dbReference type="PANTHER" id="PTHR21368">
    <property type="entry name" value="50S RIBOSOMAL PROTEIN L9"/>
    <property type="match status" value="1"/>
</dbReference>
<dbReference type="Pfam" id="PF03948">
    <property type="entry name" value="Ribosomal_L9_C"/>
    <property type="match status" value="1"/>
</dbReference>
<dbReference type="Pfam" id="PF01281">
    <property type="entry name" value="Ribosomal_L9_N"/>
    <property type="match status" value="1"/>
</dbReference>
<dbReference type="SUPFAM" id="SSF55658">
    <property type="entry name" value="L9 N-domain-like"/>
    <property type="match status" value="1"/>
</dbReference>
<dbReference type="SUPFAM" id="SSF55653">
    <property type="entry name" value="Ribosomal protein L9 C-domain"/>
    <property type="match status" value="1"/>
</dbReference>
<dbReference type="PROSITE" id="PS00651">
    <property type="entry name" value="RIBOSOMAL_L9"/>
    <property type="match status" value="1"/>
</dbReference>
<comment type="function">
    <text evidence="1">Binds to the 23S rRNA.</text>
</comment>
<comment type="similarity">
    <text evidence="1">Belongs to the bacterial ribosomal protein bL9 family.</text>
</comment>
<protein>
    <recommendedName>
        <fullName evidence="1">Large ribosomal subunit protein bL9</fullName>
    </recommendedName>
    <alternativeName>
        <fullName evidence="2">50S ribosomal protein L9</fullName>
    </alternativeName>
</protein>
<name>RL9_NEIG1</name>
<proteinExistence type="inferred from homology"/>